<gene>
    <name type="primary">N</name>
    <name type="synonym">NP</name>
</gene>
<organism>
    <name type="scientific">Human parainfluenza 2 virus (strain Toshiba)</name>
    <name type="common">HPIV-2</name>
    <dbReference type="NCBI Taxonomy" id="11214"/>
    <lineage>
        <taxon>Viruses</taxon>
        <taxon>Riboviria</taxon>
        <taxon>Orthornavirae</taxon>
        <taxon>Negarnaviricota</taxon>
        <taxon>Haploviricotina</taxon>
        <taxon>Monjiviricetes</taxon>
        <taxon>Mononegavirales</taxon>
        <taxon>Paramyxoviridae</taxon>
        <taxon>Rubulavirinae</taxon>
        <taxon>Orthorubulavirus</taxon>
        <taxon>Orthorubulavirus laryngotracheitidis</taxon>
        <taxon>Human parainfluenza 2 virus</taxon>
    </lineage>
</organism>
<protein>
    <recommendedName>
        <fullName>Nucleoprotein</fullName>
    </recommendedName>
    <alternativeName>
        <fullName>Nucleocapsid protein</fullName>
        <shortName>NP</shortName>
        <shortName>Protein N</shortName>
    </alternativeName>
</protein>
<sequence length="542" mass="61121">MSSVLKTFERFTIQQELQEQSDDTPVPLETIKPTIRVFVINNNDPVVRSRLLFFNLRIIMSNTAREGHRAGALLSLLSLPSAAMSNHIKLAMHSPEASIDRVEITGFENNSFRVIPDARSTMSRGEVLAFEALAEDIPDTLNHQTPFVNNDVEDDIFDETEKFLDVCYSVLMQAWIVTCKCMTAPDQPPVSVAKMAKYQQQGRINARYVLQPEAQRLIQNAIRKSMVVRHFMTYELQLSQSRSLLANRYYAMVGDIGKYIEHSGMGGFFLTLKYGLGTRWPTLALAAFSGELQKLKALMLHYQSLGPMAKYMALLESPKLMDFVPSEYPLDYSYAMGIGTVLDTNMRNYAYGRSYLNQQYFQLGVETARKQQGAVDNRTAEDLGMTAADKADLTATISKLSLSQLPRGRQPISDPFAGANDREMGGQANDTPVYNFNPIDTRRYDNYDSDGEDRIDNDQDQAIRENRGEPGQPNNQTSDNQQRFNPPIPQRTSGMSSEEFQHSMNQYIRAMHEQYRGSQDDDANDATDGNDISLELVGDFDS</sequence>
<proteinExistence type="evidence at protein level"/>
<accession>P21737</accession>
<reference key="1">
    <citation type="journal article" date="1990" name="Virology">
        <title>Sequence analyses of the 3' genome end and NP gene of human parainfluenza type 2 virus: sequence variation of the gene-starting signal and the conserved 3' end.</title>
        <authorList>
            <person name="Yuasa T."/>
            <person name="Bando H."/>
            <person name="Kawano M."/>
            <person name="Tsurudome M."/>
            <person name="Nishio M."/>
            <person name="Kondo K."/>
            <person name="Komada H."/>
            <person name="Ito Y."/>
        </authorList>
    </citation>
    <scope>NUCLEOTIDE SEQUENCE [MRNA]</scope>
</reference>
<reference key="2">
    <citation type="journal article" date="1996" name="J. Gen. Virol.">
        <title>Interaction between nucleocapsid protein (NP) and phosphoprotein (P) of human parainfluenza virus type 2: one of the two NP binding sites on P is essential for granule formation.</title>
        <authorList>
            <person name="Nishio M."/>
            <person name="Tsurudome M."/>
            <person name="Kawano M."/>
            <person name="Watanabe N."/>
            <person name="Ohgimoto S."/>
            <person name="Ito M."/>
            <person name="Komada H."/>
            <person name="Ito Y."/>
        </authorList>
    </citation>
    <scope>INTERACTION WITH P PROTEIN</scope>
</reference>
<reference key="3">
    <citation type="journal article" date="1999" name="J. Gen. Virol.">
        <title>Mapping of domains on the human parainfluenza virus type 2 nucleocapsid protein (NP) required for NP-phosphoprotein or NP-NP interaction.</title>
        <authorList>
            <person name="Nishio M."/>
            <person name="Tsurudome M."/>
            <person name="Ito M."/>
            <person name="Kawano M."/>
            <person name="Kusagawa S."/>
            <person name="Komada H."/>
            <person name="Ito Y."/>
        </authorList>
    </citation>
    <scope>HOMOMULTIMERIZATION</scope>
</reference>
<comment type="function">
    <text evidence="2 3">Forms the helical nucleocapsid (NC), protecting the genome from nucleases (By similarity). The encapsidated genomic RNA serves as template for transcription and replication; encapsidation by N is coupled to RNA synthesis. Forms the encapsidation complex with the phosphoprotein protein P. Before encapsidation, the newly synthesized free N protein, so-called N0, is chaperoned by P (By similarity).</text>
</comment>
<comment type="subunit">
    <text evidence="1 3 4">Homomultimer; forms the nucleocapsid (By similarity). Binds to the viral genomic RNA (By similarity). N0 interacts with the phosphoprotein (via N-terminus); this interaction allows P to chaperon N0 to avoid N polymerization before encapsidation. Interacts as N-RNA template with the phosphoprotein (via C-terminus); this interaction positions the polymerase on the template (By similarity).</text>
</comment>
<comment type="subcellular location">
    <subcellularLocation>
        <location evidence="6">Virion</location>
    </subcellularLocation>
    <subcellularLocation>
        <location>Host cytoplasm</location>
    </subcellularLocation>
</comment>
<comment type="domain">
    <text evidence="3">Ncore is globular and carries the regions required for self-assembly and RNA-binding. Ntail is an intrinsically disordered monomeric domain in the C-terminus.</text>
</comment>
<comment type="similarity">
    <text evidence="6">Belongs to the paramyxoviruses nucleocapsid family.</text>
</comment>
<dbReference type="EMBL" id="M55320">
    <property type="protein sequence ID" value="AAA46865.1"/>
    <property type="molecule type" value="mRNA"/>
</dbReference>
<dbReference type="EMBL" id="X57559">
    <property type="protein sequence ID" value="CAA40783.1"/>
    <property type="molecule type" value="Genomic_RNA"/>
</dbReference>
<dbReference type="PIR" id="A36420">
    <property type="entry name" value="VHNZP2"/>
</dbReference>
<dbReference type="SMR" id="P21737"/>
<dbReference type="KEGG" id="vg:935191"/>
<dbReference type="Proteomes" id="UP000000472">
    <property type="component" value="Segment"/>
</dbReference>
<dbReference type="GO" id="GO:0019029">
    <property type="term" value="C:helical viral capsid"/>
    <property type="evidence" value="ECO:0007669"/>
    <property type="project" value="UniProtKB-KW"/>
</dbReference>
<dbReference type="GO" id="GO:0030430">
    <property type="term" value="C:host cell cytoplasm"/>
    <property type="evidence" value="ECO:0007669"/>
    <property type="project" value="UniProtKB-SubCell"/>
</dbReference>
<dbReference type="GO" id="GO:1990904">
    <property type="term" value="C:ribonucleoprotein complex"/>
    <property type="evidence" value="ECO:0007669"/>
    <property type="project" value="UniProtKB-KW"/>
</dbReference>
<dbReference type="GO" id="GO:0019013">
    <property type="term" value="C:viral nucleocapsid"/>
    <property type="evidence" value="ECO:0007669"/>
    <property type="project" value="UniProtKB-KW"/>
</dbReference>
<dbReference type="GO" id="GO:0003723">
    <property type="term" value="F:RNA binding"/>
    <property type="evidence" value="ECO:0007669"/>
    <property type="project" value="UniProtKB-KW"/>
</dbReference>
<dbReference type="GO" id="GO:0005198">
    <property type="term" value="F:structural molecule activity"/>
    <property type="evidence" value="ECO:0007669"/>
    <property type="project" value="InterPro"/>
</dbReference>
<dbReference type="InterPro" id="IPR002021">
    <property type="entry name" value="Paramyx_ncap"/>
</dbReference>
<dbReference type="Pfam" id="PF00973">
    <property type="entry name" value="Paramyxo_ncap"/>
    <property type="match status" value="1"/>
</dbReference>
<evidence type="ECO:0000250" key="1">
    <source>
        <dbReference type="UniProtKB" id="O57286"/>
    </source>
</evidence>
<evidence type="ECO:0000250" key="2">
    <source>
        <dbReference type="UniProtKB" id="O89339"/>
    </source>
</evidence>
<evidence type="ECO:0000250" key="3">
    <source>
        <dbReference type="UniProtKB" id="P06159"/>
    </source>
</evidence>
<evidence type="ECO:0000250" key="4">
    <source>
        <dbReference type="UniProtKB" id="Q07097"/>
    </source>
</evidence>
<evidence type="ECO:0000256" key="5">
    <source>
        <dbReference type="SAM" id="MobiDB-lite"/>
    </source>
</evidence>
<evidence type="ECO:0000305" key="6"/>
<feature type="chain" id="PRO_0000142670" description="Nucleoprotein">
    <location>
        <begin position="1"/>
        <end position="542"/>
    </location>
</feature>
<feature type="region of interest" description="Ncore" evidence="3">
    <location>
        <begin position="1"/>
        <end position="403"/>
    </location>
</feature>
<feature type="region of interest" description="Homomultimerization">
    <location>
        <begin position="1"/>
        <end position="294"/>
    </location>
</feature>
<feature type="region of interest" description="P protein-binding 1">
    <location>
        <begin position="295"/>
        <end position="402"/>
    </location>
</feature>
<feature type="region of interest" description="Disordered" evidence="5">
    <location>
        <begin position="402"/>
        <end position="498"/>
    </location>
</feature>
<feature type="region of interest" description="P protein-binding 2">
    <location>
        <begin position="403"/>
        <end position="494"/>
    </location>
</feature>
<feature type="region of interest" description="Ntail" evidence="3">
    <location>
        <begin position="404"/>
        <end position="542"/>
    </location>
</feature>
<feature type="compositionally biased region" description="Basic and acidic residues" evidence="5">
    <location>
        <begin position="440"/>
        <end position="468"/>
    </location>
</feature>
<feature type="compositionally biased region" description="Polar residues" evidence="5">
    <location>
        <begin position="472"/>
        <end position="498"/>
    </location>
</feature>
<feature type="binding site" evidence="1">
    <location>
        <position position="180"/>
    </location>
    <ligand>
        <name>RNA</name>
        <dbReference type="ChEBI" id="CHEBI:33697"/>
    </ligand>
</feature>
<feature type="binding site" evidence="1">
    <location>
        <position position="194"/>
    </location>
    <ligand>
        <name>RNA</name>
        <dbReference type="ChEBI" id="CHEBI:33697"/>
    </ligand>
</feature>
<feature type="binding site" evidence="1">
    <location>
        <position position="259"/>
    </location>
    <ligand>
        <name>RNA</name>
        <dbReference type="ChEBI" id="CHEBI:33697"/>
    </ligand>
</feature>
<feature type="binding site" evidence="1">
    <location>
        <position position="349"/>
    </location>
    <ligand>
        <name>RNA</name>
        <dbReference type="ChEBI" id="CHEBI:33697"/>
    </ligand>
</feature>
<feature type="binding site" evidence="1">
    <location>
        <position position="353"/>
    </location>
    <ligand>
        <name>RNA</name>
        <dbReference type="ChEBI" id="CHEBI:33697"/>
    </ligand>
</feature>
<keyword id="KW-0167">Capsid protein</keyword>
<keyword id="KW-1139">Helical capsid protein</keyword>
<keyword id="KW-1035">Host cytoplasm</keyword>
<keyword id="KW-1185">Reference proteome</keyword>
<keyword id="KW-0687">Ribonucleoprotein</keyword>
<keyword id="KW-0694">RNA-binding</keyword>
<keyword id="KW-0543">Viral nucleoprotein</keyword>
<keyword id="KW-0946">Virion</keyword>
<name>NCAP_PI2HT</name>
<organismHost>
    <name type="scientific">Homo sapiens</name>
    <name type="common">Human</name>
    <dbReference type="NCBI Taxonomy" id="9606"/>
</organismHost>